<feature type="chain" id="PRO_0000194320" description="3-deoxy-D-manno-octulosonic acid kinase">
    <location>
        <begin position="1"/>
        <end position="249"/>
    </location>
</feature>
<feature type="active site" evidence="1">
    <location>
        <position position="175"/>
    </location>
</feature>
<dbReference type="EC" id="2.7.1.166" evidence="1"/>
<dbReference type="EMBL" id="AE008923">
    <property type="protein sequence ID" value="AAM35969.1"/>
    <property type="molecule type" value="Genomic_DNA"/>
</dbReference>
<dbReference type="RefSeq" id="WP_005913881.1">
    <property type="nucleotide sequence ID" value="NC_003919.1"/>
</dbReference>
<dbReference type="SMR" id="Q8PNH3"/>
<dbReference type="KEGG" id="xac:XAC1095"/>
<dbReference type="eggNOG" id="COG3642">
    <property type="taxonomic scope" value="Bacteria"/>
</dbReference>
<dbReference type="HOGENOM" id="CLU_094226_0_0_6"/>
<dbReference type="UniPathway" id="UPA00958"/>
<dbReference type="Proteomes" id="UP000000576">
    <property type="component" value="Chromosome"/>
</dbReference>
<dbReference type="GO" id="GO:0005886">
    <property type="term" value="C:plasma membrane"/>
    <property type="evidence" value="ECO:0007669"/>
    <property type="project" value="UniProtKB-SubCell"/>
</dbReference>
<dbReference type="GO" id="GO:0005524">
    <property type="term" value="F:ATP binding"/>
    <property type="evidence" value="ECO:0007669"/>
    <property type="project" value="UniProtKB-UniRule"/>
</dbReference>
<dbReference type="GO" id="GO:0016301">
    <property type="term" value="F:kinase activity"/>
    <property type="evidence" value="ECO:0007669"/>
    <property type="project" value="UniProtKB-KW"/>
</dbReference>
<dbReference type="GO" id="GO:0016773">
    <property type="term" value="F:phosphotransferase activity, alcohol group as acceptor"/>
    <property type="evidence" value="ECO:0007669"/>
    <property type="project" value="UniProtKB-UniRule"/>
</dbReference>
<dbReference type="GO" id="GO:0009244">
    <property type="term" value="P:lipopolysaccharide core region biosynthetic process"/>
    <property type="evidence" value="ECO:0007669"/>
    <property type="project" value="UniProtKB-UniRule"/>
</dbReference>
<dbReference type="Gene3D" id="1.10.510.10">
    <property type="entry name" value="Transferase(Phosphotransferase) domain 1"/>
    <property type="match status" value="1"/>
</dbReference>
<dbReference type="HAMAP" id="MF_00521">
    <property type="entry name" value="KDO_kinase"/>
    <property type="match status" value="1"/>
</dbReference>
<dbReference type="InterPro" id="IPR022826">
    <property type="entry name" value="KDO_kinase"/>
</dbReference>
<dbReference type="InterPro" id="IPR011009">
    <property type="entry name" value="Kinase-like_dom_sf"/>
</dbReference>
<dbReference type="NCBIfam" id="NF002475">
    <property type="entry name" value="PRK01723.1"/>
    <property type="match status" value="1"/>
</dbReference>
<dbReference type="Pfam" id="PF06293">
    <property type="entry name" value="Kdo"/>
    <property type="match status" value="1"/>
</dbReference>
<dbReference type="SUPFAM" id="SSF56112">
    <property type="entry name" value="Protein kinase-like (PK-like)"/>
    <property type="match status" value="1"/>
</dbReference>
<proteinExistence type="inferred from homology"/>
<reference key="1">
    <citation type="journal article" date="2002" name="Nature">
        <title>Comparison of the genomes of two Xanthomonas pathogens with differing host specificities.</title>
        <authorList>
            <person name="da Silva A.C.R."/>
            <person name="Ferro J.A."/>
            <person name="Reinach F.C."/>
            <person name="Farah C.S."/>
            <person name="Furlan L.R."/>
            <person name="Quaggio R.B."/>
            <person name="Monteiro-Vitorello C.B."/>
            <person name="Van Sluys M.A."/>
            <person name="Almeida N.F. Jr."/>
            <person name="Alves L.M.C."/>
            <person name="do Amaral A.M."/>
            <person name="Bertolini M.C."/>
            <person name="Camargo L.E.A."/>
            <person name="Camarotte G."/>
            <person name="Cannavan F."/>
            <person name="Cardozo J."/>
            <person name="Chambergo F."/>
            <person name="Ciapina L.P."/>
            <person name="Cicarelli R.M.B."/>
            <person name="Coutinho L.L."/>
            <person name="Cursino-Santos J.R."/>
            <person name="El-Dorry H."/>
            <person name="Faria J.B."/>
            <person name="Ferreira A.J.S."/>
            <person name="Ferreira R.C.C."/>
            <person name="Ferro M.I.T."/>
            <person name="Formighieri E.F."/>
            <person name="Franco M.C."/>
            <person name="Greggio C.C."/>
            <person name="Gruber A."/>
            <person name="Katsuyama A.M."/>
            <person name="Kishi L.T."/>
            <person name="Leite R.P."/>
            <person name="Lemos E.G.M."/>
            <person name="Lemos M.V.F."/>
            <person name="Locali E.C."/>
            <person name="Machado M.A."/>
            <person name="Madeira A.M.B.N."/>
            <person name="Martinez-Rossi N.M."/>
            <person name="Martins E.C."/>
            <person name="Meidanis J."/>
            <person name="Menck C.F.M."/>
            <person name="Miyaki C.Y."/>
            <person name="Moon D.H."/>
            <person name="Moreira L.M."/>
            <person name="Novo M.T.M."/>
            <person name="Okura V.K."/>
            <person name="Oliveira M.C."/>
            <person name="Oliveira V.R."/>
            <person name="Pereira H.A."/>
            <person name="Rossi A."/>
            <person name="Sena J.A.D."/>
            <person name="Silva C."/>
            <person name="de Souza R.F."/>
            <person name="Spinola L.A.F."/>
            <person name="Takita M.A."/>
            <person name="Tamura R.E."/>
            <person name="Teixeira E.C."/>
            <person name="Tezza R.I.D."/>
            <person name="Trindade dos Santos M."/>
            <person name="Truffi D."/>
            <person name="Tsai S.M."/>
            <person name="White F.F."/>
            <person name="Setubal J.C."/>
            <person name="Kitajima J.P."/>
        </authorList>
    </citation>
    <scope>NUCLEOTIDE SEQUENCE [LARGE SCALE GENOMIC DNA]</scope>
    <source>
        <strain>306</strain>
    </source>
</reference>
<organism>
    <name type="scientific">Xanthomonas axonopodis pv. citri (strain 306)</name>
    <dbReference type="NCBI Taxonomy" id="190486"/>
    <lineage>
        <taxon>Bacteria</taxon>
        <taxon>Pseudomonadati</taxon>
        <taxon>Pseudomonadota</taxon>
        <taxon>Gammaproteobacteria</taxon>
        <taxon>Lysobacterales</taxon>
        <taxon>Lysobacteraceae</taxon>
        <taxon>Xanthomonas</taxon>
    </lineage>
</organism>
<name>KDKA_XANAC</name>
<protein>
    <recommendedName>
        <fullName evidence="1">3-deoxy-D-manno-octulosonic acid kinase</fullName>
        <shortName evidence="1">Kdo kinase</shortName>
        <ecNumber evidence="1">2.7.1.166</ecNumber>
    </recommendedName>
</protein>
<evidence type="ECO:0000255" key="1">
    <source>
        <dbReference type="HAMAP-Rule" id="MF_00521"/>
    </source>
</evidence>
<gene>
    <name evidence="1" type="primary">kdkA</name>
    <name type="ordered locus">XAC1095</name>
</gene>
<keyword id="KW-0067">ATP-binding</keyword>
<keyword id="KW-0997">Cell inner membrane</keyword>
<keyword id="KW-1003">Cell membrane</keyword>
<keyword id="KW-0418">Kinase</keyword>
<keyword id="KW-0448">Lipopolysaccharide biosynthesis</keyword>
<keyword id="KW-0472">Membrane</keyword>
<keyword id="KW-0547">Nucleotide-binding</keyword>
<keyword id="KW-0808">Transferase</keyword>
<sequence length="249" mass="28435">MVSFDATEALAPYREGRGYGAILFDRERLRQADASLFSPQSWGDRARPVDAGGRGGAWFVDAPFGHSVLRQYLRGGMAARVSRDRYLWKGAGRTRSFAEFRLMRELIKRKLPVPRPLAACYLREGLGYRAALLMERLENVRSLAEHAQVAGRGAPWEATGQLIARFHRAGLDHADLNAHNILFDAGGHGWLIDFDRGVLRIPATRWRERNLKRLHRSLLKLRGNRSREDVDKDYARLHRAYELAWGRGY</sequence>
<accession>Q8PNH3</accession>
<comment type="function">
    <text evidence="1">Catalyzes the ATP-dependent phosphorylation of the 3-deoxy-D-manno-octulosonic acid (Kdo) residue in Kdo-lipid IV(A) at the 4-OH position.</text>
</comment>
<comment type="catalytic activity">
    <reaction evidence="1">
        <text>an alpha-Kdo-(2-&gt;6)-lipid IVA + ATP = a 4-O-phospho-alpha-Kdo-(2-&gt;6)-lipid IVA + ADP + H(+)</text>
        <dbReference type="Rhea" id="RHEA:74271"/>
        <dbReference type="ChEBI" id="CHEBI:15378"/>
        <dbReference type="ChEBI" id="CHEBI:30616"/>
        <dbReference type="ChEBI" id="CHEBI:176428"/>
        <dbReference type="ChEBI" id="CHEBI:193140"/>
        <dbReference type="ChEBI" id="CHEBI:456216"/>
        <dbReference type="EC" id="2.7.1.166"/>
    </reaction>
</comment>
<comment type="pathway">
    <text evidence="1">Bacterial outer membrane biogenesis; LPS core biosynthesis.</text>
</comment>
<comment type="subcellular location">
    <subcellularLocation>
        <location evidence="1">Cell inner membrane</location>
        <topology evidence="1">Peripheral membrane protein</topology>
        <orientation evidence="1">Cytoplasmic side</orientation>
    </subcellularLocation>
</comment>
<comment type="similarity">
    <text evidence="1">Belongs to the protein kinase superfamily. KdkA/RfaP family.</text>
</comment>